<accession>P78831</accession>
<name>GHT5_SCHPO</name>
<keyword id="KW-0325">Glycoprotein</keyword>
<keyword id="KW-0472">Membrane</keyword>
<keyword id="KW-0597">Phosphoprotein</keyword>
<keyword id="KW-1185">Reference proteome</keyword>
<keyword id="KW-0762">Sugar transport</keyword>
<keyword id="KW-0812">Transmembrane</keyword>
<keyword id="KW-1133">Transmembrane helix</keyword>
<keyword id="KW-0813">Transport</keyword>
<reference key="1">
    <citation type="journal article" date="2000" name="J. Bacteriol.">
        <title>Multiple hexose transporters of Schizosaccharomyces pombe.</title>
        <authorList>
            <person name="Heiland S."/>
            <person name="Radovanovic N."/>
            <person name="Hoefer M."/>
            <person name="Winderickx J."/>
            <person name="Lichtenberg H."/>
        </authorList>
    </citation>
    <scope>NUCLEOTIDE SEQUENCE [MRNA]</scope>
    <scope>CHARACTERIZATION</scope>
    <source>
        <strain>972 / ATCC 24843</strain>
    </source>
</reference>
<reference key="2">
    <citation type="journal article" date="2002" name="Nature">
        <title>The genome sequence of Schizosaccharomyces pombe.</title>
        <authorList>
            <person name="Wood V."/>
            <person name="Gwilliam R."/>
            <person name="Rajandream M.A."/>
            <person name="Lyne M.H."/>
            <person name="Lyne R."/>
            <person name="Stewart A."/>
            <person name="Sgouros J.G."/>
            <person name="Peat N."/>
            <person name="Hayles J."/>
            <person name="Baker S.G."/>
            <person name="Basham D."/>
            <person name="Bowman S."/>
            <person name="Brooks K."/>
            <person name="Brown D."/>
            <person name="Brown S."/>
            <person name="Chillingworth T."/>
            <person name="Churcher C.M."/>
            <person name="Collins M."/>
            <person name="Connor R."/>
            <person name="Cronin A."/>
            <person name="Davis P."/>
            <person name="Feltwell T."/>
            <person name="Fraser A."/>
            <person name="Gentles S."/>
            <person name="Goble A."/>
            <person name="Hamlin N."/>
            <person name="Harris D.E."/>
            <person name="Hidalgo J."/>
            <person name="Hodgson G."/>
            <person name="Holroyd S."/>
            <person name="Hornsby T."/>
            <person name="Howarth S."/>
            <person name="Huckle E.J."/>
            <person name="Hunt S."/>
            <person name="Jagels K."/>
            <person name="James K.D."/>
            <person name="Jones L."/>
            <person name="Jones M."/>
            <person name="Leather S."/>
            <person name="McDonald S."/>
            <person name="McLean J."/>
            <person name="Mooney P."/>
            <person name="Moule S."/>
            <person name="Mungall K.L."/>
            <person name="Murphy L.D."/>
            <person name="Niblett D."/>
            <person name="Odell C."/>
            <person name="Oliver K."/>
            <person name="O'Neil S."/>
            <person name="Pearson D."/>
            <person name="Quail M.A."/>
            <person name="Rabbinowitsch E."/>
            <person name="Rutherford K.M."/>
            <person name="Rutter S."/>
            <person name="Saunders D."/>
            <person name="Seeger K."/>
            <person name="Sharp S."/>
            <person name="Skelton J."/>
            <person name="Simmonds M.N."/>
            <person name="Squares R."/>
            <person name="Squares S."/>
            <person name="Stevens K."/>
            <person name="Taylor K."/>
            <person name="Taylor R.G."/>
            <person name="Tivey A."/>
            <person name="Walsh S.V."/>
            <person name="Warren T."/>
            <person name="Whitehead S."/>
            <person name="Woodward J.R."/>
            <person name="Volckaert G."/>
            <person name="Aert R."/>
            <person name="Robben J."/>
            <person name="Grymonprez B."/>
            <person name="Weltjens I."/>
            <person name="Vanstreels E."/>
            <person name="Rieger M."/>
            <person name="Schaefer M."/>
            <person name="Mueller-Auer S."/>
            <person name="Gabel C."/>
            <person name="Fuchs M."/>
            <person name="Duesterhoeft A."/>
            <person name="Fritzc C."/>
            <person name="Holzer E."/>
            <person name="Moestl D."/>
            <person name="Hilbert H."/>
            <person name="Borzym K."/>
            <person name="Langer I."/>
            <person name="Beck A."/>
            <person name="Lehrach H."/>
            <person name="Reinhardt R."/>
            <person name="Pohl T.M."/>
            <person name="Eger P."/>
            <person name="Zimmermann W."/>
            <person name="Wedler H."/>
            <person name="Wambutt R."/>
            <person name="Purnelle B."/>
            <person name="Goffeau A."/>
            <person name="Cadieu E."/>
            <person name="Dreano S."/>
            <person name="Gloux S."/>
            <person name="Lelaure V."/>
            <person name="Mottier S."/>
            <person name="Galibert F."/>
            <person name="Aves S.J."/>
            <person name="Xiang Z."/>
            <person name="Hunt C."/>
            <person name="Moore K."/>
            <person name="Hurst S.M."/>
            <person name="Lucas M."/>
            <person name="Rochet M."/>
            <person name="Gaillardin C."/>
            <person name="Tallada V.A."/>
            <person name="Garzon A."/>
            <person name="Thode G."/>
            <person name="Daga R.R."/>
            <person name="Cruzado L."/>
            <person name="Jimenez J."/>
            <person name="Sanchez M."/>
            <person name="del Rey F."/>
            <person name="Benito J."/>
            <person name="Dominguez A."/>
            <person name="Revuelta J.L."/>
            <person name="Moreno S."/>
            <person name="Armstrong J."/>
            <person name="Forsburg S.L."/>
            <person name="Cerutti L."/>
            <person name="Lowe T."/>
            <person name="McCombie W.R."/>
            <person name="Paulsen I."/>
            <person name="Potashkin J."/>
            <person name="Shpakovski G.V."/>
            <person name="Ussery D."/>
            <person name="Barrell B.G."/>
            <person name="Nurse P."/>
        </authorList>
    </citation>
    <scope>NUCLEOTIDE SEQUENCE [LARGE SCALE GENOMIC DNA]</scope>
    <source>
        <strain>972 / ATCC 24843</strain>
    </source>
</reference>
<reference key="3">
    <citation type="journal article" date="1997" name="DNA Res.">
        <title>Identification of open reading frames in Schizosaccharomyces pombe cDNAs.</title>
        <authorList>
            <person name="Yoshioka S."/>
            <person name="Kato K."/>
            <person name="Nakai K."/>
            <person name="Okayama H."/>
            <person name="Nojima H."/>
        </authorList>
    </citation>
    <scope>NUCLEOTIDE SEQUENCE [LARGE SCALE MRNA] OF 176-546</scope>
    <source>
        <strain>PR745</strain>
    </source>
</reference>
<reference key="4">
    <citation type="journal article" date="2008" name="J. Proteome Res.">
        <title>Phosphoproteome analysis of fission yeast.</title>
        <authorList>
            <person name="Wilson-Grady J.T."/>
            <person name="Villen J."/>
            <person name="Gygi S.P."/>
        </authorList>
    </citation>
    <scope>PHOSPHORYLATION [LARGE SCALE ANALYSIS] AT SER-528 AND SER-537</scope>
    <scope>IDENTIFICATION BY MASS SPECTROMETRY</scope>
</reference>
<organism>
    <name type="scientific">Schizosaccharomyces pombe (strain 972 / ATCC 24843)</name>
    <name type="common">Fission yeast</name>
    <dbReference type="NCBI Taxonomy" id="284812"/>
    <lineage>
        <taxon>Eukaryota</taxon>
        <taxon>Fungi</taxon>
        <taxon>Dikarya</taxon>
        <taxon>Ascomycota</taxon>
        <taxon>Taphrinomycotina</taxon>
        <taxon>Schizosaccharomycetes</taxon>
        <taxon>Schizosaccharomycetales</taxon>
        <taxon>Schizosaccharomycetaceae</taxon>
        <taxon>Schizosaccharomyces</taxon>
    </lineage>
</organism>
<sequence>MGKNLTIVMLVFVSMAGWMFGADTGSIGGITNMRDFQSRFADRYNPVTDSYSYSSARQGLITGMVNVGSFFGCFLSSPLMDRIGKRTSIMFWTIVYLIGIILQVTAVPSWVQIMVAKIWTGLSIGALSVLAPGFQSEVAPADLRGTIVTTYQLAVTGGIFIAACINMGTHKLHKTAQWRVSMGINLLWGIITFIGISFLPESPRYLISVGRDEEALQIMAKNNDLPIEHEVIQTEYHVIKSDCEAELAGGPATWPEIFGPDIRYRTFLGLGVMSLQQLTGDNYYFYYGFEVFEGTGMNSPYLSALILDAVNFGCTFGGLFVLEFFGRRMPLIIGALWQSITFFIYAAVGNRALTRKNGTSNHRAGAVMIVFSCLFIFSFAQTWGPAAYVIVGESYPIRYRSKCAAVATTGNWLWGFLISFFTPFITNSIGFKYGYIFAACNLCAACIIFLFAHETKGLTLEEINELYISGAKPWMPRPKNLGNFTKQQEEVREKSRGVQGESAAHLENVDGEEGIEDSSNDISSTTSSDGRAKPESSYHDQEEQFA</sequence>
<protein>
    <recommendedName>
        <fullName>High-affinity glucose transporter ght5</fullName>
    </recommendedName>
    <alternativeName>
        <fullName>Hexose transporter 5</fullName>
    </alternativeName>
</protein>
<proteinExistence type="evidence at protein level"/>
<comment type="function">
    <text>High-affinity glucose transporter.</text>
</comment>
<comment type="subcellular location">
    <subcellularLocation>
        <location>Membrane</location>
        <topology>Multi-pass membrane protein</topology>
    </subcellularLocation>
</comment>
<comment type="similarity">
    <text evidence="4">Belongs to the major facilitator superfamily. Sugar transporter (TC 2.A.1.1) family.</text>
</comment>
<feature type="chain" id="PRO_0000050413" description="High-affinity glucose transporter ght5">
    <location>
        <begin position="1"/>
        <end position="546"/>
    </location>
</feature>
<feature type="topological domain" description="Cytoplasmic" evidence="1">
    <location>
        <begin position="1"/>
        <end position="9"/>
    </location>
</feature>
<feature type="transmembrane region" description="Helical; Name=1" evidence="1">
    <location>
        <begin position="10"/>
        <end position="30"/>
    </location>
</feature>
<feature type="topological domain" description="Extracellular" evidence="1">
    <location>
        <begin position="31"/>
        <end position="58"/>
    </location>
</feature>
<feature type="transmembrane region" description="Helical; Name=2" evidence="1">
    <location>
        <begin position="59"/>
        <end position="79"/>
    </location>
</feature>
<feature type="topological domain" description="Cytoplasmic" evidence="1">
    <location>
        <begin position="80"/>
        <end position="87"/>
    </location>
</feature>
<feature type="transmembrane region" description="Helical; Name=3" evidence="1">
    <location>
        <begin position="88"/>
        <end position="108"/>
    </location>
</feature>
<feature type="topological domain" description="Extracellular" evidence="1">
    <location>
        <begin position="109"/>
        <end position="112"/>
    </location>
</feature>
<feature type="transmembrane region" description="Helical; Name=4" evidence="1">
    <location>
        <begin position="113"/>
        <end position="133"/>
    </location>
</feature>
<feature type="topological domain" description="Cytoplasmic" evidence="1">
    <location>
        <begin position="134"/>
        <end position="144"/>
    </location>
</feature>
<feature type="transmembrane region" description="Helical; Name=5" evidence="1">
    <location>
        <begin position="145"/>
        <end position="165"/>
    </location>
</feature>
<feature type="topological domain" description="Extracellular" evidence="1">
    <location>
        <begin position="166"/>
        <end position="179"/>
    </location>
</feature>
<feature type="transmembrane region" description="Helical; Name=6" evidence="1">
    <location>
        <begin position="180"/>
        <end position="200"/>
    </location>
</feature>
<feature type="topological domain" description="Cytoplasmic" evidence="1">
    <location>
        <begin position="201"/>
        <end position="266"/>
    </location>
</feature>
<feature type="transmembrane region" description="Helical; Name=7" evidence="1">
    <location>
        <begin position="267"/>
        <end position="285"/>
    </location>
</feature>
<feature type="topological domain" description="Extracellular" evidence="1">
    <location>
        <begin position="286"/>
        <end position="301"/>
    </location>
</feature>
<feature type="transmembrane region" description="Helical; Name=8" evidence="1">
    <location>
        <begin position="302"/>
        <end position="322"/>
    </location>
</feature>
<feature type="topological domain" description="Cytoplasmic" evidence="1">
    <location>
        <begin position="323"/>
        <end position="328"/>
    </location>
</feature>
<feature type="transmembrane region" description="Helical; Name=9" evidence="1">
    <location>
        <begin position="329"/>
        <end position="349"/>
    </location>
</feature>
<feature type="topological domain" description="Extracellular" evidence="1">
    <location>
        <begin position="350"/>
        <end position="363"/>
    </location>
</feature>
<feature type="transmembrane region" description="Helical; Name=10" evidence="1">
    <location>
        <begin position="364"/>
        <end position="384"/>
    </location>
</feature>
<feature type="topological domain" description="Cytoplasmic" evidence="1">
    <location>
        <begin position="385"/>
        <end position="404"/>
    </location>
</feature>
<feature type="transmembrane region" description="Helical; Name=11" evidence="1">
    <location>
        <begin position="405"/>
        <end position="425"/>
    </location>
</feature>
<feature type="topological domain" description="Extracellular" evidence="1">
    <location>
        <begin position="426"/>
        <end position="432"/>
    </location>
</feature>
<feature type="transmembrane region" description="Helical; Name=12" evidence="1">
    <location>
        <begin position="433"/>
        <end position="453"/>
    </location>
</feature>
<feature type="topological domain" description="Cytoplasmic" evidence="1">
    <location>
        <begin position="454"/>
        <end position="546"/>
    </location>
</feature>
<feature type="region of interest" description="Disordered" evidence="2">
    <location>
        <begin position="486"/>
        <end position="546"/>
    </location>
</feature>
<feature type="compositionally biased region" description="Basic and acidic residues" evidence="2">
    <location>
        <begin position="487"/>
        <end position="496"/>
    </location>
</feature>
<feature type="compositionally biased region" description="Acidic residues" evidence="2">
    <location>
        <begin position="509"/>
        <end position="519"/>
    </location>
</feature>
<feature type="compositionally biased region" description="Low complexity" evidence="2">
    <location>
        <begin position="520"/>
        <end position="529"/>
    </location>
</feature>
<feature type="compositionally biased region" description="Basic and acidic residues" evidence="2">
    <location>
        <begin position="530"/>
        <end position="546"/>
    </location>
</feature>
<feature type="modified residue" description="Phosphoserine" evidence="3">
    <location>
        <position position="528"/>
    </location>
</feature>
<feature type="modified residue" description="Phosphoserine" evidence="3">
    <location>
        <position position="537"/>
    </location>
</feature>
<feature type="glycosylation site" description="N-linked (GlcNAc...) asparagine" evidence="1">
    <location>
        <position position="357"/>
    </location>
</feature>
<gene>
    <name type="primary">ght5</name>
    <name type="ORF">SPCC1235.14</name>
</gene>
<evidence type="ECO:0000255" key="1"/>
<evidence type="ECO:0000256" key="2">
    <source>
        <dbReference type="SAM" id="MobiDB-lite"/>
    </source>
</evidence>
<evidence type="ECO:0000269" key="3">
    <source>
    </source>
</evidence>
<evidence type="ECO:0000305" key="4"/>
<dbReference type="EMBL" id="AF051141">
    <property type="protein sequence ID" value="AAC63977.1"/>
    <property type="molecule type" value="mRNA"/>
</dbReference>
<dbReference type="EMBL" id="CU329672">
    <property type="protein sequence ID" value="CAA21118.1"/>
    <property type="molecule type" value="Genomic_DNA"/>
</dbReference>
<dbReference type="EMBL" id="D89179">
    <property type="protein sequence ID" value="BAA13841.1"/>
    <property type="molecule type" value="mRNA"/>
</dbReference>
<dbReference type="PIR" id="T40888">
    <property type="entry name" value="T40888"/>
</dbReference>
<dbReference type="PIR" id="T42623">
    <property type="entry name" value="T42623"/>
</dbReference>
<dbReference type="RefSeq" id="NP_587740.1">
    <property type="nucleotide sequence ID" value="NM_001022735.2"/>
</dbReference>
<dbReference type="SMR" id="P78831"/>
<dbReference type="BioGRID" id="275810">
    <property type="interactions" value="4"/>
</dbReference>
<dbReference type="FunCoup" id="P78831">
    <property type="interactions" value="324"/>
</dbReference>
<dbReference type="STRING" id="284812.P78831"/>
<dbReference type="GlyCosmos" id="P78831">
    <property type="glycosylation" value="1 site, No reported glycans"/>
</dbReference>
<dbReference type="iPTMnet" id="P78831"/>
<dbReference type="SwissPalm" id="P78831"/>
<dbReference type="PaxDb" id="4896-SPCC1235.14.1"/>
<dbReference type="EnsemblFungi" id="SPCC1235.14.1">
    <property type="protein sequence ID" value="SPCC1235.14.1:pep"/>
    <property type="gene ID" value="SPCC1235.14"/>
</dbReference>
<dbReference type="GeneID" id="2539240"/>
<dbReference type="KEGG" id="spo:2539240"/>
<dbReference type="PomBase" id="SPCC1235.14">
    <property type="gene designation" value="ght5"/>
</dbReference>
<dbReference type="VEuPathDB" id="FungiDB:SPCC1235.14"/>
<dbReference type="eggNOG" id="KOG0254">
    <property type="taxonomic scope" value="Eukaryota"/>
</dbReference>
<dbReference type="HOGENOM" id="CLU_001265_30_1_1"/>
<dbReference type="InParanoid" id="P78831"/>
<dbReference type="OMA" id="VMVVFAC"/>
<dbReference type="PhylomeDB" id="P78831"/>
<dbReference type="PRO" id="PR:P78831"/>
<dbReference type="Proteomes" id="UP000002485">
    <property type="component" value="Chromosome III"/>
</dbReference>
<dbReference type="GO" id="GO:0000328">
    <property type="term" value="C:fungal-type vacuole lumen"/>
    <property type="evidence" value="ECO:0000314"/>
    <property type="project" value="PomBase"/>
</dbReference>
<dbReference type="GO" id="GO:0005886">
    <property type="term" value="C:plasma membrane"/>
    <property type="evidence" value="ECO:0000314"/>
    <property type="project" value="PomBase"/>
</dbReference>
<dbReference type="GO" id="GO:0031520">
    <property type="term" value="C:plasma membrane of cell tip"/>
    <property type="evidence" value="ECO:0000314"/>
    <property type="project" value="PomBase"/>
</dbReference>
<dbReference type="GO" id="GO:0005351">
    <property type="term" value="F:carbohydrate:proton symporter activity"/>
    <property type="evidence" value="ECO:0000318"/>
    <property type="project" value="GO_Central"/>
</dbReference>
<dbReference type="GO" id="GO:0140108">
    <property type="term" value="F:high-affinity D-glucose transmembrane transporter activity"/>
    <property type="evidence" value="ECO:0000315"/>
    <property type="project" value="PomBase"/>
</dbReference>
<dbReference type="GO" id="GO:0008643">
    <property type="term" value="P:carbohydrate transport"/>
    <property type="evidence" value="ECO:0000318"/>
    <property type="project" value="GO_Central"/>
</dbReference>
<dbReference type="GO" id="GO:0046323">
    <property type="term" value="P:D-glucose import"/>
    <property type="evidence" value="ECO:0000315"/>
    <property type="project" value="PomBase"/>
</dbReference>
<dbReference type="GO" id="GO:0098708">
    <property type="term" value="P:D-glucose import across plasma membrane"/>
    <property type="evidence" value="ECO:0000315"/>
    <property type="project" value="PomBase"/>
</dbReference>
<dbReference type="CDD" id="cd17356">
    <property type="entry name" value="MFS_HXT"/>
    <property type="match status" value="1"/>
</dbReference>
<dbReference type="FunFam" id="1.20.1250.20:FF:000044">
    <property type="entry name" value="Hexose transporter Hxt3p"/>
    <property type="match status" value="1"/>
</dbReference>
<dbReference type="Gene3D" id="1.20.1250.20">
    <property type="entry name" value="MFS general substrate transporter like domains"/>
    <property type="match status" value="1"/>
</dbReference>
<dbReference type="InterPro" id="IPR020846">
    <property type="entry name" value="MFS_dom"/>
</dbReference>
<dbReference type="InterPro" id="IPR005828">
    <property type="entry name" value="MFS_sugar_transport-like"/>
</dbReference>
<dbReference type="InterPro" id="IPR050360">
    <property type="entry name" value="MFS_Sugar_Transporters"/>
</dbReference>
<dbReference type="InterPro" id="IPR036259">
    <property type="entry name" value="MFS_trans_sf"/>
</dbReference>
<dbReference type="InterPro" id="IPR003663">
    <property type="entry name" value="Sugar/inositol_transpt"/>
</dbReference>
<dbReference type="InterPro" id="IPR005829">
    <property type="entry name" value="Sugar_transporter_CS"/>
</dbReference>
<dbReference type="NCBIfam" id="TIGR00879">
    <property type="entry name" value="SP"/>
    <property type="match status" value="1"/>
</dbReference>
<dbReference type="PANTHER" id="PTHR48022:SF90">
    <property type="entry name" value="HIGH-AFFINITY GLUCONATE TRANSPORTER GHT3-RELATED"/>
    <property type="match status" value="1"/>
</dbReference>
<dbReference type="PANTHER" id="PTHR48022">
    <property type="entry name" value="PLASTIDIC GLUCOSE TRANSPORTER 4"/>
    <property type="match status" value="1"/>
</dbReference>
<dbReference type="Pfam" id="PF00083">
    <property type="entry name" value="Sugar_tr"/>
    <property type="match status" value="1"/>
</dbReference>
<dbReference type="PRINTS" id="PR00171">
    <property type="entry name" value="SUGRTRNSPORT"/>
</dbReference>
<dbReference type="SUPFAM" id="SSF103473">
    <property type="entry name" value="MFS general substrate transporter"/>
    <property type="match status" value="1"/>
</dbReference>
<dbReference type="PROSITE" id="PS50850">
    <property type="entry name" value="MFS"/>
    <property type="match status" value="1"/>
</dbReference>
<dbReference type="PROSITE" id="PS00216">
    <property type="entry name" value="SUGAR_TRANSPORT_1"/>
    <property type="match status" value="1"/>
</dbReference>